<gene>
    <name evidence="1" type="primary">rplX</name>
    <name type="ordered locus">YpsIP31758_3903</name>
</gene>
<protein>
    <recommendedName>
        <fullName evidence="1">Large ribosomal subunit protein uL24</fullName>
    </recommendedName>
    <alternativeName>
        <fullName evidence="2">50S ribosomal protein L24</fullName>
    </alternativeName>
</protein>
<organism>
    <name type="scientific">Yersinia pseudotuberculosis serotype O:1b (strain IP 31758)</name>
    <dbReference type="NCBI Taxonomy" id="349747"/>
    <lineage>
        <taxon>Bacteria</taxon>
        <taxon>Pseudomonadati</taxon>
        <taxon>Pseudomonadota</taxon>
        <taxon>Gammaproteobacteria</taxon>
        <taxon>Enterobacterales</taxon>
        <taxon>Yersiniaceae</taxon>
        <taxon>Yersinia</taxon>
    </lineage>
</organism>
<sequence length="104" mass="11347">MAAKIRRDDEVIVLTGKDKGKRGKVKNVLSSGKVIVEGINLVKKHQKPVPALNQPGGIVEKEAAIQVSNLALFNATTGKADRVGFRFEDGKKVRFFKSTSETIK</sequence>
<reference key="1">
    <citation type="journal article" date="2007" name="PLoS Genet.">
        <title>The complete genome sequence of Yersinia pseudotuberculosis IP31758, the causative agent of Far East scarlet-like fever.</title>
        <authorList>
            <person name="Eppinger M."/>
            <person name="Rosovitz M.J."/>
            <person name="Fricke W.F."/>
            <person name="Rasko D.A."/>
            <person name="Kokorina G."/>
            <person name="Fayolle C."/>
            <person name="Lindler L.E."/>
            <person name="Carniel E."/>
            <person name="Ravel J."/>
        </authorList>
    </citation>
    <scope>NUCLEOTIDE SEQUENCE [LARGE SCALE GENOMIC DNA]</scope>
    <source>
        <strain>IP 31758</strain>
    </source>
</reference>
<feature type="chain" id="PRO_1000067588" description="Large ribosomal subunit protein uL24">
    <location>
        <begin position="1"/>
        <end position="104"/>
    </location>
</feature>
<keyword id="KW-0687">Ribonucleoprotein</keyword>
<keyword id="KW-0689">Ribosomal protein</keyword>
<keyword id="KW-0694">RNA-binding</keyword>
<keyword id="KW-0699">rRNA-binding</keyword>
<name>RL24_YERP3</name>
<accession>A7FNM3</accession>
<dbReference type="EMBL" id="CP000720">
    <property type="protein sequence ID" value="ABS47201.1"/>
    <property type="molecule type" value="Genomic_DNA"/>
</dbReference>
<dbReference type="RefSeq" id="WP_002213327.1">
    <property type="nucleotide sequence ID" value="NC_009708.1"/>
</dbReference>
<dbReference type="SMR" id="A7FNM3"/>
<dbReference type="GeneID" id="57974384"/>
<dbReference type="KEGG" id="ypi:YpsIP31758_3903"/>
<dbReference type="HOGENOM" id="CLU_093315_2_2_6"/>
<dbReference type="Proteomes" id="UP000002412">
    <property type="component" value="Chromosome"/>
</dbReference>
<dbReference type="GO" id="GO:1990904">
    <property type="term" value="C:ribonucleoprotein complex"/>
    <property type="evidence" value="ECO:0007669"/>
    <property type="project" value="UniProtKB-KW"/>
</dbReference>
<dbReference type="GO" id="GO:0005840">
    <property type="term" value="C:ribosome"/>
    <property type="evidence" value="ECO:0007669"/>
    <property type="project" value="UniProtKB-KW"/>
</dbReference>
<dbReference type="GO" id="GO:0019843">
    <property type="term" value="F:rRNA binding"/>
    <property type="evidence" value="ECO:0007669"/>
    <property type="project" value="UniProtKB-UniRule"/>
</dbReference>
<dbReference type="GO" id="GO:0003735">
    <property type="term" value="F:structural constituent of ribosome"/>
    <property type="evidence" value="ECO:0007669"/>
    <property type="project" value="InterPro"/>
</dbReference>
<dbReference type="GO" id="GO:0006412">
    <property type="term" value="P:translation"/>
    <property type="evidence" value="ECO:0007669"/>
    <property type="project" value="UniProtKB-UniRule"/>
</dbReference>
<dbReference type="CDD" id="cd06089">
    <property type="entry name" value="KOW_RPL26"/>
    <property type="match status" value="1"/>
</dbReference>
<dbReference type="FunFam" id="2.30.30.30:FF:000004">
    <property type="entry name" value="50S ribosomal protein L24"/>
    <property type="match status" value="1"/>
</dbReference>
<dbReference type="Gene3D" id="2.30.30.30">
    <property type="match status" value="1"/>
</dbReference>
<dbReference type="HAMAP" id="MF_01326_B">
    <property type="entry name" value="Ribosomal_uL24_B"/>
    <property type="match status" value="1"/>
</dbReference>
<dbReference type="InterPro" id="IPR005824">
    <property type="entry name" value="KOW"/>
</dbReference>
<dbReference type="InterPro" id="IPR014722">
    <property type="entry name" value="Rib_uL2_dom2"/>
</dbReference>
<dbReference type="InterPro" id="IPR003256">
    <property type="entry name" value="Ribosomal_uL24"/>
</dbReference>
<dbReference type="InterPro" id="IPR005825">
    <property type="entry name" value="Ribosomal_uL24_CS"/>
</dbReference>
<dbReference type="InterPro" id="IPR041988">
    <property type="entry name" value="Ribosomal_uL24_KOW"/>
</dbReference>
<dbReference type="InterPro" id="IPR008991">
    <property type="entry name" value="Translation_prot_SH3-like_sf"/>
</dbReference>
<dbReference type="NCBIfam" id="TIGR01079">
    <property type="entry name" value="rplX_bact"/>
    <property type="match status" value="1"/>
</dbReference>
<dbReference type="PANTHER" id="PTHR12903">
    <property type="entry name" value="MITOCHONDRIAL RIBOSOMAL PROTEIN L24"/>
    <property type="match status" value="1"/>
</dbReference>
<dbReference type="Pfam" id="PF00467">
    <property type="entry name" value="KOW"/>
    <property type="match status" value="1"/>
</dbReference>
<dbReference type="Pfam" id="PF17136">
    <property type="entry name" value="ribosomal_L24"/>
    <property type="match status" value="1"/>
</dbReference>
<dbReference type="SMART" id="SM00739">
    <property type="entry name" value="KOW"/>
    <property type="match status" value="1"/>
</dbReference>
<dbReference type="SUPFAM" id="SSF50104">
    <property type="entry name" value="Translation proteins SH3-like domain"/>
    <property type="match status" value="1"/>
</dbReference>
<dbReference type="PROSITE" id="PS01108">
    <property type="entry name" value="RIBOSOMAL_L24"/>
    <property type="match status" value="1"/>
</dbReference>
<evidence type="ECO:0000255" key="1">
    <source>
        <dbReference type="HAMAP-Rule" id="MF_01326"/>
    </source>
</evidence>
<evidence type="ECO:0000305" key="2"/>
<proteinExistence type="inferred from homology"/>
<comment type="function">
    <text evidence="1">One of two assembly initiator proteins, it binds directly to the 5'-end of the 23S rRNA, where it nucleates assembly of the 50S subunit.</text>
</comment>
<comment type="function">
    <text evidence="1">One of the proteins that surrounds the polypeptide exit tunnel on the outside of the subunit.</text>
</comment>
<comment type="subunit">
    <text evidence="1">Part of the 50S ribosomal subunit.</text>
</comment>
<comment type="similarity">
    <text evidence="1">Belongs to the universal ribosomal protein uL24 family.</text>
</comment>